<organismHost>
    <name type="scientific">Equidae</name>
    <name type="common">horses</name>
    <dbReference type="NCBI Taxonomy" id="9788"/>
</organismHost>
<gene>
    <name type="primary">GP2a</name>
    <name type="ORF">2a</name>
</gene>
<evidence type="ECO:0000250" key="1"/>
<evidence type="ECO:0000255" key="2"/>
<evidence type="ECO:0000269" key="3">
    <source>
    </source>
</evidence>
<evidence type="ECO:0000305" key="4"/>
<dbReference type="EMBL" id="DQ846750">
    <property type="protein sequence ID" value="ABI64072.1"/>
    <property type="molecule type" value="Genomic_RNA"/>
</dbReference>
<dbReference type="EMBL" id="X53459">
    <property type="protein sequence ID" value="CAC42776.1"/>
    <property type="molecule type" value="Genomic_RNA"/>
</dbReference>
<dbReference type="EMBL" id="EF492543">
    <property type="protein sequence ID" value="ABR92765.1"/>
    <property type="molecule type" value="Genomic_RNA"/>
</dbReference>
<dbReference type="EMBL" id="EF492544">
    <property type="protein sequence ID" value="ABR92772.1"/>
    <property type="molecule type" value="Genomic_RNA"/>
</dbReference>
<dbReference type="EMBL" id="EF492545">
    <property type="protein sequence ID" value="ABR92779.1"/>
    <property type="molecule type" value="Genomic_RNA"/>
</dbReference>
<dbReference type="EMBL" id="EF492546">
    <property type="protein sequence ID" value="ABR92786.1"/>
    <property type="molecule type" value="Genomic_RNA"/>
</dbReference>
<dbReference type="EMBL" id="EF492549">
    <property type="protein sequence ID" value="ABR92807.1"/>
    <property type="molecule type" value="Genomic_RNA"/>
</dbReference>
<dbReference type="EMBL" id="EF492550">
    <property type="protein sequence ID" value="ABR92814.1"/>
    <property type="molecule type" value="Genomic_RNA"/>
</dbReference>
<dbReference type="EMBL" id="EF492551">
    <property type="protein sequence ID" value="ABR92821.1"/>
    <property type="molecule type" value="Genomic_RNA"/>
</dbReference>
<dbReference type="EMBL" id="EF492552">
    <property type="protein sequence ID" value="ABR92828.1"/>
    <property type="molecule type" value="Genomic_RNA"/>
</dbReference>
<dbReference type="EMBL" id="EF492562">
    <property type="protein sequence ID" value="ABR92898.1"/>
    <property type="molecule type" value="Genomic_RNA"/>
</dbReference>
<dbReference type="EMBL" id="EF492563">
    <property type="protein sequence ID" value="ABR92905.1"/>
    <property type="molecule type" value="Genomic_RNA"/>
</dbReference>
<dbReference type="EMBL" id="EF492564">
    <property type="protein sequence ID" value="ABR92912.1"/>
    <property type="molecule type" value="Genomic_RNA"/>
</dbReference>
<dbReference type="EMBL" id="EU586273">
    <property type="protein sequence ID" value="ACE82258.1"/>
    <property type="molecule type" value="Genomic_RNA"/>
</dbReference>
<dbReference type="EMBL" id="EU586274">
    <property type="protein sequence ID" value="ACE82267.1"/>
    <property type="molecule type" value="Genomic_RNA"/>
</dbReference>
<dbReference type="EMBL" id="EU586275">
    <property type="protein sequence ID" value="ACE82276.1"/>
    <property type="molecule type" value="Genomic_RNA"/>
</dbReference>
<dbReference type="SMR" id="Q91DM1"/>
<dbReference type="TCDB" id="1.A.116.1.6">
    <property type="family name" value="the pore-forming porcine reproductive and respiratory syndrome virus viroporin (prrsv) family"/>
</dbReference>
<dbReference type="iPTMnet" id="Q91DM1"/>
<dbReference type="KEGG" id="vg:921345"/>
<dbReference type="Proteomes" id="UP000000353">
    <property type="component" value="Segment"/>
</dbReference>
<dbReference type="Proteomes" id="UP000138219">
    <property type="component" value="Genome"/>
</dbReference>
<dbReference type="Proteomes" id="UP000161084">
    <property type="component" value="Genome"/>
</dbReference>
<dbReference type="Proteomes" id="UP000169900">
    <property type="component" value="Genome"/>
</dbReference>
<dbReference type="Proteomes" id="UP000170187">
    <property type="component" value="Genome"/>
</dbReference>
<dbReference type="GO" id="GO:0005576">
    <property type="term" value="C:extracellular region"/>
    <property type="evidence" value="ECO:0007669"/>
    <property type="project" value="UniProtKB-SubCell"/>
</dbReference>
<dbReference type="GO" id="GO:0044167">
    <property type="term" value="C:host cell endoplasmic reticulum membrane"/>
    <property type="evidence" value="ECO:0007669"/>
    <property type="project" value="UniProtKB-SubCell"/>
</dbReference>
<dbReference type="GO" id="GO:0044178">
    <property type="term" value="C:host cell Golgi membrane"/>
    <property type="evidence" value="ECO:0007669"/>
    <property type="project" value="UniProtKB-SubCell"/>
</dbReference>
<dbReference type="GO" id="GO:0016020">
    <property type="term" value="C:membrane"/>
    <property type="evidence" value="ECO:0007669"/>
    <property type="project" value="UniProtKB-KW"/>
</dbReference>
<dbReference type="GO" id="GO:0019031">
    <property type="term" value="C:viral envelope"/>
    <property type="evidence" value="ECO:0007669"/>
    <property type="project" value="UniProtKB-KW"/>
</dbReference>
<dbReference type="GO" id="GO:0055036">
    <property type="term" value="C:virion membrane"/>
    <property type="evidence" value="ECO:0007669"/>
    <property type="project" value="UniProtKB-SubCell"/>
</dbReference>
<dbReference type="GO" id="GO:0015267">
    <property type="term" value="F:channel activity"/>
    <property type="evidence" value="ECO:0007669"/>
    <property type="project" value="UniProtKB-KW"/>
</dbReference>
<dbReference type="GO" id="GO:0034220">
    <property type="term" value="P:monoatomic ion transmembrane transport"/>
    <property type="evidence" value="ECO:0007669"/>
    <property type="project" value="UniProtKB-KW"/>
</dbReference>
<keyword id="KW-0325">Glycoprotein</keyword>
<keyword id="KW-1038">Host endoplasmic reticulum</keyword>
<keyword id="KW-1040">Host Golgi apparatus</keyword>
<keyword id="KW-1043">Host membrane</keyword>
<keyword id="KW-0407">Ion channel</keyword>
<keyword id="KW-0406">Ion transport</keyword>
<keyword id="KW-0449">Lipoprotein</keyword>
<keyword id="KW-0472">Membrane</keyword>
<keyword id="KW-0519">Myristate</keyword>
<keyword id="KW-1185">Reference proteome</keyword>
<keyword id="KW-0964">Secreted</keyword>
<keyword id="KW-0812">Transmembrane</keyword>
<keyword id="KW-1133">Transmembrane helix</keyword>
<keyword id="KW-0813">Transport</keyword>
<keyword id="KW-0261">Viral envelope protein</keyword>
<keyword id="KW-1182">Viral ion channel</keyword>
<keyword id="KW-0946">Virion</keyword>
<sequence>MGLVWSLISNSIQTIIADFAISVIDAALFFLMLLALAVVTVFLFWLIVAIGRSLVARCSRGARYRPV</sequence>
<name>E_EAVBU</name>
<proteinExistence type="evidence at protein level"/>
<organism>
    <name type="scientific">Equine arteritis virus (strain Bucyrus)</name>
    <name type="common">EAV</name>
    <dbReference type="NCBI Taxonomy" id="299386"/>
    <lineage>
        <taxon>Viruses</taxon>
        <taxon>Riboviria</taxon>
        <taxon>Orthornavirae</taxon>
        <taxon>Pisuviricota</taxon>
        <taxon>Pisoniviricetes</taxon>
        <taxon>Nidovirales</taxon>
        <taxon>Arnidovirineae</taxon>
        <taxon>Arteriviridae</taxon>
        <taxon>Equarterivirinae</taxon>
        <taxon>Alphaarterivirus</taxon>
        <taxon>Alphaarterivirus equid</taxon>
    </lineage>
</organism>
<protein>
    <recommendedName>
        <fullName>Envelope small membrane protein</fullName>
        <shortName>Protein E</shortName>
    </recommendedName>
    <alternativeName>
        <fullName>Glycoprotein 2a</fullName>
        <shortName>Protein GP2a</shortName>
    </alternativeName>
</protein>
<accession>Q91DM1</accession>
<comment type="function">
    <text evidence="1">Minor envelope protein. May function as a viroporin in the virion envelope that facilitates uncoating of the virus in order to release the genomic RNA into the cytoplasm for subsequent replication (By similarity).</text>
</comment>
<comment type="subunit">
    <text evidence="1">Homomultimer. Associates with itself into higher-order structures, including dimers, trimers and tetramers. Associates with the GP2b-GP3-GP4 complex (By similarity).</text>
</comment>
<comment type="subcellular location">
    <subcellularLocation>
        <location evidence="4">Virion membrane</location>
        <topology evidence="4">Single-pass type I membrane protein</topology>
    </subcellularLocation>
    <subcellularLocation>
        <location evidence="4">Host endoplasmic reticulum membrane</location>
        <topology evidence="4">Single-pass type I membrane protein</topology>
    </subcellularLocation>
    <subcellularLocation>
        <location evidence="4">Host Golgi apparatus membrane</location>
        <topology evidence="4">Single-pass type I membrane protein</topology>
    </subcellularLocation>
    <subcellularLocation>
        <location evidence="1">Secreted</location>
    </subcellularLocation>
</comment>
<comment type="PTM">
    <text evidence="3">Myristoylated.</text>
</comment>
<comment type="PTM">
    <text>Not glycosylated.</text>
</comment>
<comment type="similarity">
    <text evidence="4">Belongs to the arteriviridae E protein family.</text>
</comment>
<reference key="1">
    <citation type="journal article" date="1991" name="J. Virol.">
        <title>Equine arteritis virus is not a togavirus but belongs to the coronaviruslike superfamily.</title>
        <authorList>
            <person name="den Boon J.A."/>
            <person name="Snijder E.J."/>
            <person name="Chirnside E.D."/>
            <person name="de Vries A.A.F."/>
            <person name="Horzinek M.C."/>
            <person name="Spaan W.J.M."/>
        </authorList>
    </citation>
    <scope>NUCLEOTIDE SEQUENCE [GENOMIC RNA]</scope>
</reference>
<reference key="2">
    <citation type="submission" date="2001-06" db="EMBL/GenBank/DDBJ databases">
        <authorList>
            <person name="Snijder E.J."/>
        </authorList>
    </citation>
    <scope>NUCLEOTIDE SEQUENCE [GENOMIC RNA]</scope>
</reference>
<reference key="3">
    <citation type="journal article" date="2007" name="J. Gen. Virol.">
        <title>Development and characterization of an infectious cDNA clone of the virulent Bucyrus strain of Equine arteritis virus.</title>
        <authorList>
            <person name="Balasuriya U.B."/>
            <person name="Snijder E.J."/>
            <person name="Heidner H.W."/>
            <person name="Zhang J."/>
            <person name="Zevenhoven-Dobbe J.C."/>
            <person name="Boone J.D."/>
            <person name="McCollum W.H."/>
            <person name="Timoney P.J."/>
            <person name="MacLachlan N.J."/>
        </authorList>
    </citation>
    <scope>NUCLEOTIDE SEQUENCE [GENOMIC RNA]</scope>
    <source>
        <strain>Infectious clone SD 01-08</strain>
    </source>
</reference>
<reference key="4">
    <citation type="journal article" date="2007" name="Arch. Virol.">
        <title>Genetic variation and phylogenetic analysis of 22 French isolates of equine arteritis virus.</title>
        <authorList>
            <person name="Zhang J."/>
            <person name="Miszczak F."/>
            <person name="Pronost S."/>
            <person name="Fortier C."/>
            <person name="Balasuriya U.B."/>
            <person name="Zientara S."/>
            <person name="Fortier G."/>
            <person name="Timoney P.J."/>
        </authorList>
    </citation>
    <scope>NUCLEOTIDE SEQUENCE [GENOMIC RNA]</scope>
    <source>
        <strain>Isolate F11</strain>
        <strain>Isolate F12</strain>
        <strain>Isolate F13</strain>
        <strain>Isolate F14</strain>
        <strain>Isolate F24</strain>
        <strain>Isolate F25</strain>
        <strain>Isolate F26</strain>
        <strain>Isolate F5</strain>
        <strain>Isolate F6</strain>
        <strain>Isolate F7</strain>
        <strain>Isolate F8</strain>
    </source>
</reference>
<reference key="5">
    <citation type="journal article" date="2008" name="Virology">
        <title>Amino acid substitutions in the structural or nonstructural proteins of a vaccine strain of equine arteritis virus are associated with its attenuation.</title>
        <authorList>
            <person name="Zhang J."/>
            <person name="Go Y.Y."/>
            <person name="MacLachlan N.J."/>
            <person name="Meade B.J."/>
            <person name="Timoney P.J."/>
            <person name="Balasuriya U.B.R."/>
        </authorList>
    </citation>
    <scope>NUCLEOTIDE SEQUENCE [GENOMIC RNA]</scope>
    <source>
        <strain>ARTAC vaccine</strain>
        <strain>HK116</strain>
        <strain>HK25</strain>
    </source>
</reference>
<reference key="6">
    <citation type="journal article" date="1999" name="J. Virol.">
        <title>Identification of a novel structural protein of arteriviruses.</title>
        <authorList>
            <person name="Snijder E.J."/>
            <person name="van Tol H."/>
            <person name="Pedersen K.W."/>
            <person name="Raamsman M.J."/>
            <person name="de Vries A.A."/>
        </authorList>
    </citation>
    <scope>IDENTIFICATION</scope>
</reference>
<reference key="7">
    <citation type="journal article" date="2009" name="J. Gen. Virol.">
        <title>Myristoylation of the arterivirus E protein: the fatty acid modification is not essential for membrane association but contributes significantly to virus infectivity.</title>
        <authorList>
            <person name="Thaa B."/>
            <person name="Kabatek A."/>
            <person name="Zevenhoven-Dobbe J.C."/>
            <person name="Snijder E.J."/>
            <person name="Herrmann A."/>
            <person name="Veit M."/>
        </authorList>
    </citation>
    <scope>MYRISTOYLATION AT GLY-2</scope>
    <scope>MUTAGENESIS OF GLY-2</scope>
</reference>
<feature type="initiator methionine" description="Removed; by host" evidence="3">
    <location>
        <position position="1"/>
    </location>
</feature>
<feature type="chain" id="PRO_0000351499" description="Envelope small membrane protein">
    <location>
        <begin position="2"/>
        <end position="67"/>
    </location>
</feature>
<feature type="topological domain" description="Virion surface" evidence="2">
    <location>
        <begin position="2"/>
        <end position="27"/>
    </location>
</feature>
<feature type="transmembrane region" description="Helical" evidence="2">
    <location>
        <begin position="28"/>
        <end position="48"/>
    </location>
</feature>
<feature type="topological domain" description="Intravirion" evidence="2">
    <location>
        <begin position="49"/>
        <end position="67"/>
    </location>
</feature>
<feature type="region of interest" description="Endoplasmic reticulum retention signal" evidence="2">
    <location>
        <begin position="2"/>
        <end position="15"/>
    </location>
</feature>
<feature type="lipid moiety-binding region" description="N-myristoyl glycine; by host" evidence="3">
    <location>
        <position position="2"/>
    </location>
</feature>
<feature type="mutagenesis site" description="Absence of myristoylation. Decreased infectivity." evidence="3">
    <original>G</original>
    <variation>A</variation>
    <location>
        <position position="2"/>
    </location>
</feature>